<gene>
    <name evidence="1" type="primary">yidC</name>
    <name type="ordered locus">NT01EI_3933</name>
</gene>
<protein>
    <recommendedName>
        <fullName evidence="1">Membrane protein insertase YidC</fullName>
    </recommendedName>
    <alternativeName>
        <fullName evidence="1">Foldase YidC</fullName>
    </alternativeName>
    <alternativeName>
        <fullName evidence="1">Membrane integrase YidC</fullName>
    </alternativeName>
    <alternativeName>
        <fullName evidence="1">Membrane protein YidC</fullName>
    </alternativeName>
</protein>
<organism>
    <name type="scientific">Edwardsiella ictaluri (strain 93-146)</name>
    <dbReference type="NCBI Taxonomy" id="634503"/>
    <lineage>
        <taxon>Bacteria</taxon>
        <taxon>Pseudomonadati</taxon>
        <taxon>Pseudomonadota</taxon>
        <taxon>Gammaproteobacteria</taxon>
        <taxon>Enterobacterales</taxon>
        <taxon>Hafniaceae</taxon>
        <taxon>Edwardsiella</taxon>
    </lineage>
</organism>
<dbReference type="EMBL" id="CP001600">
    <property type="protein sequence ID" value="ACR71044.1"/>
    <property type="molecule type" value="Genomic_DNA"/>
</dbReference>
<dbReference type="RefSeq" id="WP_015873071.1">
    <property type="nucleotide sequence ID" value="NZ_CP169062.1"/>
</dbReference>
<dbReference type="SMR" id="C5BF61"/>
<dbReference type="STRING" id="67780.B6E78_11175"/>
<dbReference type="GeneID" id="69540746"/>
<dbReference type="KEGG" id="eic:NT01EI_3933"/>
<dbReference type="PATRIC" id="fig|634503.3.peg.3502"/>
<dbReference type="HOGENOM" id="CLU_016535_3_0_6"/>
<dbReference type="OrthoDB" id="9780552at2"/>
<dbReference type="Proteomes" id="UP000001485">
    <property type="component" value="Chromosome"/>
</dbReference>
<dbReference type="GO" id="GO:0005886">
    <property type="term" value="C:plasma membrane"/>
    <property type="evidence" value="ECO:0007669"/>
    <property type="project" value="UniProtKB-SubCell"/>
</dbReference>
<dbReference type="GO" id="GO:0032977">
    <property type="term" value="F:membrane insertase activity"/>
    <property type="evidence" value="ECO:0007669"/>
    <property type="project" value="InterPro"/>
</dbReference>
<dbReference type="GO" id="GO:0051205">
    <property type="term" value="P:protein insertion into membrane"/>
    <property type="evidence" value="ECO:0007669"/>
    <property type="project" value="TreeGrafter"/>
</dbReference>
<dbReference type="GO" id="GO:0015031">
    <property type="term" value="P:protein transport"/>
    <property type="evidence" value="ECO:0007669"/>
    <property type="project" value="UniProtKB-KW"/>
</dbReference>
<dbReference type="CDD" id="cd20070">
    <property type="entry name" value="5TM_YidC_Alb3"/>
    <property type="match status" value="1"/>
</dbReference>
<dbReference type="CDD" id="cd19961">
    <property type="entry name" value="EcYidC-like_peri"/>
    <property type="match status" value="1"/>
</dbReference>
<dbReference type="FunFam" id="2.70.98.90:FF:000001">
    <property type="entry name" value="Membrane protein insertase YidC"/>
    <property type="match status" value="1"/>
</dbReference>
<dbReference type="Gene3D" id="2.70.98.90">
    <property type="match status" value="1"/>
</dbReference>
<dbReference type="HAMAP" id="MF_01810">
    <property type="entry name" value="YidC_type1"/>
    <property type="match status" value="1"/>
</dbReference>
<dbReference type="InterPro" id="IPR019998">
    <property type="entry name" value="Membr_insert_YidC"/>
</dbReference>
<dbReference type="InterPro" id="IPR028053">
    <property type="entry name" value="Membr_insert_YidC_N"/>
</dbReference>
<dbReference type="InterPro" id="IPR001708">
    <property type="entry name" value="YidC/ALB3/OXA1/COX18"/>
</dbReference>
<dbReference type="InterPro" id="IPR028055">
    <property type="entry name" value="YidC/Oxa/ALB_C"/>
</dbReference>
<dbReference type="InterPro" id="IPR047196">
    <property type="entry name" value="YidC_ALB_C"/>
</dbReference>
<dbReference type="InterPro" id="IPR038221">
    <property type="entry name" value="YidC_periplasmic_sf"/>
</dbReference>
<dbReference type="NCBIfam" id="NF002351">
    <property type="entry name" value="PRK01318.1-1"/>
    <property type="match status" value="1"/>
</dbReference>
<dbReference type="NCBIfam" id="NF002352">
    <property type="entry name" value="PRK01318.1-3"/>
    <property type="match status" value="1"/>
</dbReference>
<dbReference type="NCBIfam" id="TIGR03593">
    <property type="entry name" value="yidC_nterm"/>
    <property type="match status" value="1"/>
</dbReference>
<dbReference type="NCBIfam" id="TIGR03592">
    <property type="entry name" value="yidC_oxa1_cterm"/>
    <property type="match status" value="1"/>
</dbReference>
<dbReference type="PANTHER" id="PTHR12428:SF65">
    <property type="entry name" value="CYTOCHROME C OXIDASE ASSEMBLY PROTEIN COX18, MITOCHONDRIAL"/>
    <property type="match status" value="1"/>
</dbReference>
<dbReference type="PANTHER" id="PTHR12428">
    <property type="entry name" value="OXA1"/>
    <property type="match status" value="1"/>
</dbReference>
<dbReference type="Pfam" id="PF02096">
    <property type="entry name" value="60KD_IMP"/>
    <property type="match status" value="1"/>
</dbReference>
<dbReference type="Pfam" id="PF14849">
    <property type="entry name" value="YidC_periplas"/>
    <property type="match status" value="1"/>
</dbReference>
<dbReference type="PRINTS" id="PR00701">
    <property type="entry name" value="60KDINNERMP"/>
</dbReference>
<dbReference type="PRINTS" id="PR01900">
    <property type="entry name" value="YIDCPROTEIN"/>
</dbReference>
<reference key="1">
    <citation type="submission" date="2009-03" db="EMBL/GenBank/DDBJ databases">
        <title>Complete genome sequence of Edwardsiella ictaluri 93-146.</title>
        <authorList>
            <person name="Williams M.L."/>
            <person name="Gillaspy A.F."/>
            <person name="Dyer D.W."/>
            <person name="Thune R.L."/>
            <person name="Waldbieser G.C."/>
            <person name="Schuster S.C."/>
            <person name="Gipson J."/>
            <person name="Zaitshik J."/>
            <person name="Landry C."/>
            <person name="Lawrence M.L."/>
        </authorList>
    </citation>
    <scope>NUCLEOTIDE SEQUENCE [LARGE SCALE GENOMIC DNA]</scope>
    <source>
        <strain>93-146</strain>
    </source>
</reference>
<proteinExistence type="inferred from homology"/>
<evidence type="ECO:0000255" key="1">
    <source>
        <dbReference type="HAMAP-Rule" id="MF_01810"/>
    </source>
</evidence>
<accession>C5BF61</accession>
<name>YIDC_EDWI9</name>
<comment type="function">
    <text evidence="1">Required for the insertion and/or proper folding and/or complex formation of integral membrane proteins into the membrane. Involved in integration of membrane proteins that insert both dependently and independently of the Sec translocase complex, as well as at least some lipoproteins. Aids folding of multispanning membrane proteins.</text>
</comment>
<comment type="subunit">
    <text evidence="1">Interacts with the Sec translocase complex via SecD. Specifically interacts with transmembrane segments of nascent integral membrane proteins during membrane integration.</text>
</comment>
<comment type="subcellular location">
    <subcellularLocation>
        <location evidence="1">Cell inner membrane</location>
        <topology evidence="1">Multi-pass membrane protein</topology>
    </subcellularLocation>
</comment>
<comment type="similarity">
    <text evidence="1">Belongs to the OXA1/ALB3/YidC family. Type 1 subfamily.</text>
</comment>
<feature type="chain" id="PRO_1000215971" description="Membrane protein insertase YidC">
    <location>
        <begin position="1"/>
        <end position="541"/>
    </location>
</feature>
<feature type="transmembrane region" description="Helical" evidence="1">
    <location>
        <begin position="7"/>
        <end position="27"/>
    </location>
</feature>
<feature type="transmembrane region" description="Helical" evidence="1">
    <location>
        <begin position="340"/>
        <end position="360"/>
    </location>
</feature>
<feature type="transmembrane region" description="Helical" evidence="1">
    <location>
        <begin position="415"/>
        <end position="435"/>
    </location>
</feature>
<feature type="transmembrane region" description="Helical" evidence="1">
    <location>
        <begin position="453"/>
        <end position="473"/>
    </location>
</feature>
<feature type="transmembrane region" description="Helical" evidence="1">
    <location>
        <begin position="494"/>
        <end position="514"/>
    </location>
</feature>
<sequence>MDSQRNLFLVALLFVSFLIWQAWQTDHNPQPVAQTAGQSISDTASQAVPESGQGKLITVKTDVLALTINTRGGDIEQADLLAYPATLGSDTPFQLLETTPQFVYQAQSGLTGKSGPDNPANGARPLYSANQTSYEMLPGQDELRIPLTYTAANGVIYTKTFVLKRNDYAIAVDYKVKNDSHDALDLTLFGQLKQSVDLPKHRDTGSNNFALHTFRGAAYSSSDDKYQKYSFSDIEDKNLNVQTKGGWVAMLQQYFATAWIPHDSGVNTFYSANLGNGQAAIGYKAPSVSVAPNTEKVLSTTLWVGPELQSDMAAVAPHLDLTVDYGWLWFISQPLFKLLQLIHSFVGNWGFAIIIITFIVRGIMYPLTKAQYTSMAKMRMLQPKLQAMRERIGDDKQRMSQEMMALYKTEKVNPLGGCFPLLIQMPIFLALYYMLMGSVELRQAPFALWIHDLAAPDPFYILPILMGVTMFFIQKMSPTTVTDPMQQKIMTFMPVIFTVFFLWFPSGLVLYYIVSNLVTIIQQQLIYRGLEKRGLHSRDKK</sequence>
<keyword id="KW-0997">Cell inner membrane</keyword>
<keyword id="KW-1003">Cell membrane</keyword>
<keyword id="KW-0143">Chaperone</keyword>
<keyword id="KW-0472">Membrane</keyword>
<keyword id="KW-0653">Protein transport</keyword>
<keyword id="KW-0812">Transmembrane</keyword>
<keyword id="KW-1133">Transmembrane helix</keyword>
<keyword id="KW-0813">Transport</keyword>